<accession>Q5R882</accession>
<protein>
    <recommendedName>
        <fullName evidence="4">ER membrane protein complex subunit 2</fullName>
    </recommendedName>
    <alternativeName>
        <fullName evidence="1">Tetratricopeptide repeat protein 35</fullName>
        <shortName evidence="1">TPR repeat protein 35</shortName>
    </alternativeName>
</protein>
<comment type="function">
    <text evidence="1">Part of the endoplasmic reticulum membrane protein complex (EMC) that enables the energy-independent insertion into endoplasmic reticulum membranes of newly synthesized membrane proteins. Preferentially accommodates proteins with transmembrane domains that are weakly hydrophobic or contain destabilizing features such as charged and aromatic residues. Involved in the cotranslational insertion of multi-pass membrane proteins in which stop-transfer membrane-anchor sequences become ER membrane spanning helices. It is also required for the post-translational insertion of tail-anchored/TA proteins in endoplasmic reticulum membranes. By mediating the proper cotranslational insertion of N-terminal transmembrane domains in an N-exo topology, with translocated N-terminus in the lumen of the ER, controls the topology of multi-pass membrane proteins like the G protein-coupled receptors. By regulating the insertion of various proteins in membranes, it is indirectly involved in many cellular processes.</text>
</comment>
<comment type="subunit">
    <text evidence="1">Component of the ER membrane protein complex (EMC). Interacts with WNK1 (via amphipathic alpha-helix region); promoting the ER membrane protein complex assembly by preventing EMC2 ubiquitination.</text>
</comment>
<comment type="subcellular location">
    <subcellularLocation>
        <location evidence="1">Endoplasmic reticulum membrane</location>
        <topology evidence="1">Peripheral membrane protein</topology>
        <orientation evidence="1">Cytoplasmic side</orientation>
    </subcellularLocation>
    <text evidence="2">May also localize to the nuclear envelope.</text>
</comment>
<comment type="PTM">
    <text evidence="1">Ubiquitinated when soluble in the cytoplasm, leading to its degradation by the proteasome. Interaction with EMC2 prevents its ubiquitination and degradation.</text>
</comment>
<comment type="similarity">
    <text evidence="4">Belongs to the EMC2 family.</text>
</comment>
<proteinExistence type="evidence at transcript level"/>
<evidence type="ECO:0000250" key="1">
    <source>
        <dbReference type="UniProtKB" id="Q15006"/>
    </source>
</evidence>
<evidence type="ECO:0000250" key="2">
    <source>
        <dbReference type="UniProtKB" id="Q9CRD2"/>
    </source>
</evidence>
<evidence type="ECO:0000255" key="3"/>
<evidence type="ECO:0000305" key="4"/>
<feature type="initiator methionine" description="Removed" evidence="1">
    <location>
        <position position="1"/>
    </location>
</feature>
<feature type="chain" id="PRO_0000333730" description="ER membrane protein complex subunit 2">
    <location>
        <begin position="2"/>
        <end position="297"/>
    </location>
</feature>
<feature type="repeat" description="TPR 1" evidence="3">
    <location>
        <begin position="87"/>
        <end position="120"/>
    </location>
</feature>
<feature type="repeat" description="TPR 2" evidence="3">
    <location>
        <begin position="155"/>
        <end position="188"/>
    </location>
</feature>
<feature type="repeat" description="TPR 3" evidence="3">
    <location>
        <begin position="192"/>
        <end position="225"/>
    </location>
</feature>
<feature type="modified residue" description="N-acetylalanine" evidence="1">
    <location>
        <position position="2"/>
    </location>
</feature>
<feature type="modified residue" description="N6-acetyllysine" evidence="1">
    <location>
        <position position="255"/>
    </location>
</feature>
<keyword id="KW-0007">Acetylation</keyword>
<keyword id="KW-0256">Endoplasmic reticulum</keyword>
<keyword id="KW-0472">Membrane</keyword>
<keyword id="KW-1185">Reference proteome</keyword>
<keyword id="KW-0677">Repeat</keyword>
<keyword id="KW-0802">TPR repeat</keyword>
<keyword id="KW-0832">Ubl conjugation</keyword>
<reference key="1">
    <citation type="submission" date="2004-11" db="EMBL/GenBank/DDBJ databases">
        <authorList>
            <consortium name="The German cDNA consortium"/>
        </authorList>
    </citation>
    <scope>NUCLEOTIDE SEQUENCE [LARGE SCALE MRNA]</scope>
    <source>
        <tissue>Kidney</tissue>
    </source>
</reference>
<dbReference type="EMBL" id="CR859872">
    <property type="protein sequence ID" value="CAH92028.1"/>
    <property type="molecule type" value="mRNA"/>
</dbReference>
<dbReference type="RefSeq" id="NP_001127498.1">
    <property type="nucleotide sequence ID" value="NM_001134026.1"/>
</dbReference>
<dbReference type="RefSeq" id="XP_009242301.1">
    <property type="nucleotide sequence ID" value="XM_009244026.1"/>
</dbReference>
<dbReference type="RefSeq" id="XP_063582421.1">
    <property type="nucleotide sequence ID" value="XM_063726351.1"/>
</dbReference>
<dbReference type="RefSeq" id="XP_063582422.1">
    <property type="nucleotide sequence ID" value="XM_063726352.1"/>
</dbReference>
<dbReference type="SMR" id="Q5R882"/>
<dbReference type="FunCoup" id="Q5R882">
    <property type="interactions" value="2375"/>
</dbReference>
<dbReference type="STRING" id="9601.ENSPPYP00000021116"/>
<dbReference type="Ensembl" id="ENSPPYT00000021959.3">
    <property type="protein sequence ID" value="ENSPPYP00000021116.2"/>
    <property type="gene ID" value="ENSPPYG00000018820.3"/>
</dbReference>
<dbReference type="GeneID" id="100174573"/>
<dbReference type="KEGG" id="pon:100174573"/>
<dbReference type="CTD" id="9694"/>
<dbReference type="eggNOG" id="KOG3060">
    <property type="taxonomic scope" value="Eukaryota"/>
</dbReference>
<dbReference type="GeneTree" id="ENSGT00390000011922"/>
<dbReference type="HOGENOM" id="CLU_052388_1_0_1"/>
<dbReference type="InParanoid" id="Q5R882"/>
<dbReference type="OMA" id="MSDQEGW"/>
<dbReference type="OrthoDB" id="124397at2759"/>
<dbReference type="TreeFam" id="TF312997"/>
<dbReference type="Proteomes" id="UP000001595">
    <property type="component" value="Chromosome 8"/>
</dbReference>
<dbReference type="GO" id="GO:0005737">
    <property type="term" value="C:cytoplasm"/>
    <property type="evidence" value="ECO:0000250"/>
    <property type="project" value="UniProtKB"/>
</dbReference>
<dbReference type="GO" id="GO:0072546">
    <property type="term" value="C:EMC complex"/>
    <property type="evidence" value="ECO:0000250"/>
    <property type="project" value="UniProtKB"/>
</dbReference>
<dbReference type="GO" id="GO:0005783">
    <property type="term" value="C:endoplasmic reticulum"/>
    <property type="evidence" value="ECO:0000250"/>
    <property type="project" value="UniProtKB"/>
</dbReference>
<dbReference type="GO" id="GO:0005789">
    <property type="term" value="C:endoplasmic reticulum membrane"/>
    <property type="evidence" value="ECO:0000250"/>
    <property type="project" value="UniProtKB"/>
</dbReference>
<dbReference type="GO" id="GO:0042406">
    <property type="term" value="C:extrinsic component of endoplasmic reticulum membrane"/>
    <property type="evidence" value="ECO:0000250"/>
    <property type="project" value="UniProtKB"/>
</dbReference>
<dbReference type="GO" id="GO:0032977">
    <property type="term" value="F:membrane insertase activity"/>
    <property type="evidence" value="ECO:0007669"/>
    <property type="project" value="Ensembl"/>
</dbReference>
<dbReference type="GO" id="GO:0045050">
    <property type="term" value="P:protein insertion into ER membrane by stop-transfer membrane-anchor sequence"/>
    <property type="evidence" value="ECO:0000250"/>
    <property type="project" value="UniProtKB"/>
</dbReference>
<dbReference type="GO" id="GO:0071816">
    <property type="term" value="P:tail-anchored membrane protein insertion into ER membrane"/>
    <property type="evidence" value="ECO:0000250"/>
    <property type="project" value="UniProtKB"/>
</dbReference>
<dbReference type="FunFam" id="1.25.40.10:FF:000074">
    <property type="entry name" value="ER membrane protein complex subunit 2"/>
    <property type="match status" value="1"/>
</dbReference>
<dbReference type="Gene3D" id="1.25.40.10">
    <property type="entry name" value="Tetratricopeptide repeat domain"/>
    <property type="match status" value="1"/>
</dbReference>
<dbReference type="InterPro" id="IPR039856">
    <property type="entry name" value="EMC2-like"/>
</dbReference>
<dbReference type="InterPro" id="IPR011990">
    <property type="entry name" value="TPR-like_helical_dom_sf"/>
</dbReference>
<dbReference type="InterPro" id="IPR055217">
    <property type="entry name" value="TPR_EMC2"/>
</dbReference>
<dbReference type="InterPro" id="IPR019734">
    <property type="entry name" value="TPR_rpt"/>
</dbReference>
<dbReference type="PANTHER" id="PTHR12760">
    <property type="entry name" value="TETRATRICOPEPTIDE REPEAT PROTEIN"/>
    <property type="match status" value="1"/>
</dbReference>
<dbReference type="Pfam" id="PF22890">
    <property type="entry name" value="TPR_EMC2"/>
    <property type="match status" value="1"/>
</dbReference>
<dbReference type="SMART" id="SM00028">
    <property type="entry name" value="TPR"/>
    <property type="match status" value="3"/>
</dbReference>
<dbReference type="SUPFAM" id="SSF48452">
    <property type="entry name" value="TPR-like"/>
    <property type="match status" value="1"/>
</dbReference>
<dbReference type="PROSITE" id="PS50005">
    <property type="entry name" value="TPR"/>
    <property type="match status" value="2"/>
</dbReference>
<dbReference type="PROSITE" id="PS50293">
    <property type="entry name" value="TPR_REGION"/>
    <property type="match status" value="1"/>
</dbReference>
<gene>
    <name evidence="1" type="primary">EMC2</name>
    <name evidence="1" type="synonym">TTC35</name>
</gene>
<organism>
    <name type="scientific">Pongo abelii</name>
    <name type="common">Sumatran orangutan</name>
    <name type="synonym">Pongo pygmaeus abelii</name>
    <dbReference type="NCBI Taxonomy" id="9601"/>
    <lineage>
        <taxon>Eukaryota</taxon>
        <taxon>Metazoa</taxon>
        <taxon>Chordata</taxon>
        <taxon>Craniata</taxon>
        <taxon>Vertebrata</taxon>
        <taxon>Euteleostomi</taxon>
        <taxon>Mammalia</taxon>
        <taxon>Eutheria</taxon>
        <taxon>Euarchontoglires</taxon>
        <taxon>Primates</taxon>
        <taxon>Haplorrhini</taxon>
        <taxon>Catarrhini</taxon>
        <taxon>Hominidae</taxon>
        <taxon>Pongo</taxon>
    </lineage>
</organism>
<sequence>MAKVSELYDVTWEEMRDKMRKWREENSRNSEQIVEVGEELINEYGSKLGDDIWIIYEQVMIAALDYGRDDLALFCLQELRRQFPGSHRVKRLTGMRFEAMERYDDAIQLYDRILQEDPTNTAARKRKIAIRKAQGKNVEAIRELNEYLEQFVGDQEAWHELAELYINEHDYAKAAFCLEELMMTNPHNHLYCQQYAEVKYTQGGLENLELSRKYFAQALKLNNRNMRALFGLYMSASHIASNPKASAKTKKDNMKYASWAASQINRAYQFAGRSKKETKYSLKAVEDMLETLQITQS</sequence>
<name>EMC2_PONAB</name>